<evidence type="ECO:0000250" key="1"/>
<evidence type="ECO:0000255" key="2"/>
<evidence type="ECO:0000305" key="3"/>
<sequence length="342" mass="39408">MEEELKNFIKLWISAIISISYCYYLSTGIKAGVFRLLSVLPVCALFLVFPLFFSYVHFSGCMAFFLSWLANFKLILFSFDQGPLSPLPRTLSRFICITCFPIKPQQNPNIQNYKIPIWLFAIKVVIFVVLLQMYEYKQYLSPALLLVFNSLHIFLELEIVFMLVKALVFITLGCDLEPQSNEPYLATSLQDFWGRRWNLMVPAILRPAVYLPARRMACRKVNSDQAMFLGVFAAFLVSGAVHEMLFFYLTREVPTGEVTWFFLLHGVCTVAEVAVKKSTFVRRWWRVSPTVSRLLTVGFVVVTSGWFFFPLIRSGIIERLASEALMCIDFVKHKFLLLLLGD</sequence>
<reference key="1">
    <citation type="journal article" date="1998" name="DNA Res.">
        <title>Structural analysis of Arabidopsis thaliana chromosome 5. VII. Sequence features of the regions of 1,013,767 bp covered by sixteen physically assigned P1 and TAC clones.</title>
        <authorList>
            <person name="Nakamura Y."/>
            <person name="Sato S."/>
            <person name="Asamizu E."/>
            <person name="Kaneko T."/>
            <person name="Kotani H."/>
            <person name="Miyajima N."/>
            <person name="Tabata S."/>
        </authorList>
    </citation>
    <scope>NUCLEOTIDE SEQUENCE [LARGE SCALE GENOMIC DNA]</scope>
    <source>
        <strain>cv. Columbia</strain>
    </source>
</reference>
<reference key="2">
    <citation type="journal article" date="2017" name="Plant J.">
        <title>Araport11: a complete reannotation of the Arabidopsis thaliana reference genome.</title>
        <authorList>
            <person name="Cheng C.Y."/>
            <person name="Krishnakumar V."/>
            <person name="Chan A.P."/>
            <person name="Thibaud-Nissen F."/>
            <person name="Schobel S."/>
            <person name="Town C.D."/>
        </authorList>
    </citation>
    <scope>GENOME REANNOTATION</scope>
    <source>
        <strain>cv. Columbia</strain>
    </source>
</reference>
<reference key="3">
    <citation type="journal article" date="2000" name="Plant Physiol.">
        <title>Purification of a jojoba embryo wax synthase, cloning of its cDNA, and production of high levels of wax in seeds of transgenic arabidopsis.</title>
        <authorList>
            <person name="Lardizabal K.D."/>
            <person name="Metz J.G."/>
            <person name="Sakamoto T."/>
            <person name="Hutton W.C."/>
            <person name="Pollard M.R."/>
            <person name="Lassner M.W."/>
        </authorList>
    </citation>
    <scope>IDENTIFICATION</scope>
</reference>
<name>WAXS3_ARATH</name>
<proteinExistence type="inferred from homology"/>
<protein>
    <recommendedName>
        <fullName>Probable long-chain-alcohol O-fatty-acyltransferase 3</fullName>
        <ecNumber>2.3.1.75</ecNumber>
    </recommendedName>
    <alternativeName>
        <fullName>Wax synthase 3</fullName>
    </alternativeName>
</protein>
<gene>
    <name type="primary">AT3</name>
    <name type="ordered locus">At5g55360</name>
    <name type="ORF">MTE17.7</name>
</gene>
<feature type="chain" id="PRO_0000380679" description="Probable long-chain-alcohol O-fatty-acyltransferase 3">
    <location>
        <begin position="1"/>
        <end position="342"/>
    </location>
</feature>
<feature type="transmembrane region" description="Helical" evidence="2">
    <location>
        <begin position="9"/>
        <end position="29"/>
    </location>
</feature>
<feature type="transmembrane region" description="Helical" evidence="2">
    <location>
        <begin position="36"/>
        <end position="56"/>
    </location>
</feature>
<feature type="transmembrane region" description="Helical" evidence="2">
    <location>
        <begin position="58"/>
        <end position="78"/>
    </location>
</feature>
<feature type="transmembrane region" description="Helical" evidence="2">
    <location>
        <begin position="115"/>
        <end position="135"/>
    </location>
</feature>
<feature type="transmembrane region" description="Helical" evidence="2">
    <location>
        <begin position="153"/>
        <end position="173"/>
    </location>
</feature>
<feature type="transmembrane region" description="Helical" evidence="2">
    <location>
        <begin position="227"/>
        <end position="247"/>
    </location>
</feature>
<feature type="transmembrane region" description="Helical" evidence="2">
    <location>
        <begin position="255"/>
        <end position="275"/>
    </location>
</feature>
<feature type="transmembrane region" description="Helical" evidence="2">
    <location>
        <begin position="297"/>
        <end position="317"/>
    </location>
</feature>
<keyword id="KW-0012">Acyltransferase</keyword>
<keyword id="KW-0444">Lipid biosynthesis</keyword>
<keyword id="KW-0443">Lipid metabolism</keyword>
<keyword id="KW-0472">Membrane</keyword>
<keyword id="KW-1185">Reference proteome</keyword>
<keyword id="KW-0808">Transferase</keyword>
<keyword id="KW-0812">Transmembrane</keyword>
<keyword id="KW-1133">Transmembrane helix</keyword>
<organism>
    <name type="scientific">Arabidopsis thaliana</name>
    <name type="common">Mouse-ear cress</name>
    <dbReference type="NCBI Taxonomy" id="3702"/>
    <lineage>
        <taxon>Eukaryota</taxon>
        <taxon>Viridiplantae</taxon>
        <taxon>Streptophyta</taxon>
        <taxon>Embryophyta</taxon>
        <taxon>Tracheophyta</taxon>
        <taxon>Spermatophyta</taxon>
        <taxon>Magnoliopsida</taxon>
        <taxon>eudicotyledons</taxon>
        <taxon>Gunneridae</taxon>
        <taxon>Pentapetalae</taxon>
        <taxon>rosids</taxon>
        <taxon>malvids</taxon>
        <taxon>Brassicales</taxon>
        <taxon>Brassicaceae</taxon>
        <taxon>Camelineae</taxon>
        <taxon>Arabidopsis</taxon>
    </lineage>
</organism>
<comment type="function">
    <text evidence="1">Catalyzes the final step in the synthesis of long-chain linear esters (waxes).</text>
</comment>
<comment type="catalytic activity">
    <reaction>
        <text>a long chain fatty alcohol + a fatty acyl-CoA = a wax ester + CoA</text>
        <dbReference type="Rhea" id="RHEA:38443"/>
        <dbReference type="ChEBI" id="CHEBI:10036"/>
        <dbReference type="ChEBI" id="CHEBI:17135"/>
        <dbReference type="ChEBI" id="CHEBI:57287"/>
        <dbReference type="ChEBI" id="CHEBI:77636"/>
        <dbReference type="EC" id="2.3.1.75"/>
    </reaction>
</comment>
<comment type="subcellular location">
    <subcellularLocation>
        <location evidence="3">Membrane</location>
        <topology evidence="3">Multi-pass membrane protein</topology>
    </subcellularLocation>
</comment>
<comment type="similarity">
    <text evidence="3">Belongs to the wax synthase family.</text>
</comment>
<dbReference type="EC" id="2.3.1.75"/>
<dbReference type="EMBL" id="AB015479">
    <property type="protein sequence ID" value="BAB08553.1"/>
    <property type="molecule type" value="Genomic_DNA"/>
</dbReference>
<dbReference type="EMBL" id="CP002688">
    <property type="protein sequence ID" value="AED96620.1"/>
    <property type="molecule type" value="Genomic_DNA"/>
</dbReference>
<dbReference type="RefSeq" id="NP_200347.1">
    <property type="nucleotide sequence ID" value="NM_124918.2"/>
</dbReference>
<dbReference type="STRING" id="3702.Q9FJ74"/>
<dbReference type="GlyGen" id="Q9FJ74">
    <property type="glycosylation" value="1 site"/>
</dbReference>
<dbReference type="PaxDb" id="3702-AT5G55360.1"/>
<dbReference type="EnsemblPlants" id="AT5G55360.1">
    <property type="protein sequence ID" value="AT5G55360.1"/>
    <property type="gene ID" value="AT5G55360"/>
</dbReference>
<dbReference type="GeneID" id="835629"/>
<dbReference type="Gramene" id="AT5G55360.1">
    <property type="protein sequence ID" value="AT5G55360.1"/>
    <property type="gene ID" value="AT5G55360"/>
</dbReference>
<dbReference type="KEGG" id="ath:AT5G55360"/>
<dbReference type="Araport" id="AT5G55360"/>
<dbReference type="TAIR" id="AT5G55360"/>
<dbReference type="HOGENOM" id="CLU_045902_0_0_1"/>
<dbReference type="InParanoid" id="Q9FJ74"/>
<dbReference type="OMA" id="MRTDHAR"/>
<dbReference type="PhylomeDB" id="Q9FJ74"/>
<dbReference type="BioCyc" id="ARA:AT5G55360-MONOMER"/>
<dbReference type="BRENDA" id="2.3.1.75">
    <property type="organism ID" value="399"/>
</dbReference>
<dbReference type="PRO" id="PR:Q9FJ74"/>
<dbReference type="Proteomes" id="UP000006548">
    <property type="component" value="Chromosome 5"/>
</dbReference>
<dbReference type="ExpressionAtlas" id="Q9FJ74">
    <property type="expression patterns" value="baseline and differential"/>
</dbReference>
<dbReference type="GO" id="GO:0016020">
    <property type="term" value="C:membrane"/>
    <property type="evidence" value="ECO:0007669"/>
    <property type="project" value="UniProtKB-SubCell"/>
</dbReference>
<dbReference type="GO" id="GO:0047196">
    <property type="term" value="F:long-chain-alcohol O-fatty-acyltransferase activity"/>
    <property type="evidence" value="ECO:0007669"/>
    <property type="project" value="UniProtKB-EC"/>
</dbReference>
<dbReference type="GO" id="GO:0006629">
    <property type="term" value="P:lipid metabolic process"/>
    <property type="evidence" value="ECO:0007669"/>
    <property type="project" value="UniProtKB-KW"/>
</dbReference>
<dbReference type="InterPro" id="IPR044851">
    <property type="entry name" value="Wax_synthase"/>
</dbReference>
<dbReference type="InterPro" id="IPR032805">
    <property type="entry name" value="Wax_synthase_dom"/>
</dbReference>
<dbReference type="InterPro" id="IPR017088">
    <property type="entry name" value="Wax_synthase_Magnoliopsida"/>
</dbReference>
<dbReference type="PANTHER" id="PTHR31595">
    <property type="entry name" value="LONG-CHAIN-ALCOHOL O-FATTY-ACYLTRANSFERASE 3-RELATED"/>
    <property type="match status" value="1"/>
</dbReference>
<dbReference type="PANTHER" id="PTHR31595:SF70">
    <property type="entry name" value="LONG-CHAIN-ALCOHOL O-FATTY-ACYLTRANSFERASE 3-RELATED"/>
    <property type="match status" value="1"/>
</dbReference>
<dbReference type="Pfam" id="PF13813">
    <property type="entry name" value="MBOAT_2"/>
    <property type="match status" value="1"/>
</dbReference>
<dbReference type="PIRSF" id="PIRSF037006">
    <property type="entry name" value="Wax_synthase"/>
    <property type="match status" value="1"/>
</dbReference>
<accession>Q9FJ74</accession>